<gene>
    <name evidence="1" type="primary">alaS</name>
    <name type="ordered locus">MmarC5_1241</name>
</gene>
<evidence type="ECO:0000255" key="1">
    <source>
        <dbReference type="HAMAP-Rule" id="MF_00036"/>
    </source>
</evidence>
<keyword id="KW-0030">Aminoacyl-tRNA synthetase</keyword>
<keyword id="KW-0067">ATP-binding</keyword>
<keyword id="KW-0963">Cytoplasm</keyword>
<keyword id="KW-0436">Ligase</keyword>
<keyword id="KW-0479">Metal-binding</keyword>
<keyword id="KW-0547">Nucleotide-binding</keyword>
<keyword id="KW-0648">Protein biosynthesis</keyword>
<keyword id="KW-0694">RNA-binding</keyword>
<keyword id="KW-0820">tRNA-binding</keyword>
<keyword id="KW-0862">Zinc</keyword>
<accession>A4FZA5</accession>
<dbReference type="EC" id="6.1.1.7" evidence="1"/>
<dbReference type="EMBL" id="CP000609">
    <property type="protein sequence ID" value="ABO35539.1"/>
    <property type="molecule type" value="Genomic_DNA"/>
</dbReference>
<dbReference type="RefSeq" id="WP_011868992.1">
    <property type="nucleotide sequence ID" value="NC_009135.1"/>
</dbReference>
<dbReference type="SMR" id="A4FZA5"/>
<dbReference type="STRING" id="402880.MmarC5_1241"/>
<dbReference type="GeneID" id="4929066"/>
<dbReference type="KEGG" id="mmq:MmarC5_1241"/>
<dbReference type="eggNOG" id="arCOG01255">
    <property type="taxonomic scope" value="Archaea"/>
</dbReference>
<dbReference type="HOGENOM" id="CLU_004485_4_0_2"/>
<dbReference type="OrthoDB" id="7506at2157"/>
<dbReference type="Proteomes" id="UP000000253">
    <property type="component" value="Chromosome"/>
</dbReference>
<dbReference type="GO" id="GO:0005737">
    <property type="term" value="C:cytoplasm"/>
    <property type="evidence" value="ECO:0007669"/>
    <property type="project" value="UniProtKB-SubCell"/>
</dbReference>
<dbReference type="GO" id="GO:0004813">
    <property type="term" value="F:alanine-tRNA ligase activity"/>
    <property type="evidence" value="ECO:0007669"/>
    <property type="project" value="UniProtKB-UniRule"/>
</dbReference>
<dbReference type="GO" id="GO:0002161">
    <property type="term" value="F:aminoacyl-tRNA deacylase activity"/>
    <property type="evidence" value="ECO:0007669"/>
    <property type="project" value="TreeGrafter"/>
</dbReference>
<dbReference type="GO" id="GO:0005524">
    <property type="term" value="F:ATP binding"/>
    <property type="evidence" value="ECO:0007669"/>
    <property type="project" value="UniProtKB-UniRule"/>
</dbReference>
<dbReference type="GO" id="GO:0000049">
    <property type="term" value="F:tRNA binding"/>
    <property type="evidence" value="ECO:0007669"/>
    <property type="project" value="UniProtKB-KW"/>
</dbReference>
<dbReference type="GO" id="GO:0008270">
    <property type="term" value="F:zinc ion binding"/>
    <property type="evidence" value="ECO:0007669"/>
    <property type="project" value="UniProtKB-UniRule"/>
</dbReference>
<dbReference type="GO" id="GO:0006419">
    <property type="term" value="P:alanyl-tRNA aminoacylation"/>
    <property type="evidence" value="ECO:0007669"/>
    <property type="project" value="UniProtKB-UniRule"/>
</dbReference>
<dbReference type="CDD" id="cd00673">
    <property type="entry name" value="AlaRS_core"/>
    <property type="match status" value="1"/>
</dbReference>
<dbReference type="FunFam" id="3.30.54.20:FF:000004">
    <property type="entry name" value="Alanine--tRNA ligase"/>
    <property type="match status" value="1"/>
</dbReference>
<dbReference type="FunFam" id="3.30.930.10:FF:000056">
    <property type="entry name" value="Alanine--tRNA ligase"/>
    <property type="match status" value="1"/>
</dbReference>
<dbReference type="FunFam" id="3.30.980.10:FF:000004">
    <property type="entry name" value="Alanine--tRNA ligase, cytoplasmic"/>
    <property type="match status" value="1"/>
</dbReference>
<dbReference type="Gene3D" id="2.40.30.130">
    <property type="match status" value="1"/>
</dbReference>
<dbReference type="Gene3D" id="3.10.310.40">
    <property type="match status" value="1"/>
</dbReference>
<dbReference type="Gene3D" id="3.30.54.20">
    <property type="match status" value="1"/>
</dbReference>
<dbReference type="Gene3D" id="6.10.250.550">
    <property type="match status" value="1"/>
</dbReference>
<dbReference type="Gene3D" id="3.30.930.10">
    <property type="entry name" value="Bira Bifunctional Protein, Domain 2"/>
    <property type="match status" value="1"/>
</dbReference>
<dbReference type="Gene3D" id="3.30.980.10">
    <property type="entry name" value="Threonyl-trna Synthetase, Chain A, domain 2"/>
    <property type="match status" value="1"/>
</dbReference>
<dbReference type="HAMAP" id="MF_00036_A">
    <property type="entry name" value="Ala_tRNA_synth_A"/>
    <property type="match status" value="1"/>
</dbReference>
<dbReference type="InterPro" id="IPR045864">
    <property type="entry name" value="aa-tRNA-synth_II/BPL/LPL"/>
</dbReference>
<dbReference type="InterPro" id="IPR002318">
    <property type="entry name" value="Ala-tRNA-lgiase_IIc"/>
</dbReference>
<dbReference type="InterPro" id="IPR018162">
    <property type="entry name" value="Ala-tRNA-ligase_IIc_anticod-bd"/>
</dbReference>
<dbReference type="InterPro" id="IPR018165">
    <property type="entry name" value="Ala-tRNA-synth_IIc_core"/>
</dbReference>
<dbReference type="InterPro" id="IPR018164">
    <property type="entry name" value="Ala-tRNA-synth_IIc_N"/>
</dbReference>
<dbReference type="InterPro" id="IPR022429">
    <property type="entry name" value="Ala-tRNA_lgiase_arc"/>
</dbReference>
<dbReference type="InterPro" id="IPR050058">
    <property type="entry name" value="Ala-tRNA_ligase"/>
</dbReference>
<dbReference type="InterPro" id="IPR018163">
    <property type="entry name" value="Thr/Ala-tRNA-synth_IIc_edit"/>
</dbReference>
<dbReference type="InterPro" id="IPR009000">
    <property type="entry name" value="Transl_B-barrel_sf"/>
</dbReference>
<dbReference type="InterPro" id="IPR012947">
    <property type="entry name" value="tRNA_SAD"/>
</dbReference>
<dbReference type="NCBIfam" id="TIGR03683">
    <property type="entry name" value="A-tRNA_syn_arch"/>
    <property type="match status" value="1"/>
</dbReference>
<dbReference type="NCBIfam" id="TIGR00344">
    <property type="entry name" value="alaS"/>
    <property type="match status" value="1"/>
</dbReference>
<dbReference type="PANTHER" id="PTHR11777:SF9">
    <property type="entry name" value="ALANINE--TRNA LIGASE, CYTOPLASMIC"/>
    <property type="match status" value="1"/>
</dbReference>
<dbReference type="PANTHER" id="PTHR11777">
    <property type="entry name" value="ALANYL-TRNA SYNTHETASE"/>
    <property type="match status" value="1"/>
</dbReference>
<dbReference type="Pfam" id="PF01411">
    <property type="entry name" value="tRNA-synt_2c"/>
    <property type="match status" value="1"/>
</dbReference>
<dbReference type="Pfam" id="PF07973">
    <property type="entry name" value="tRNA_SAD"/>
    <property type="match status" value="1"/>
</dbReference>
<dbReference type="PRINTS" id="PR00980">
    <property type="entry name" value="TRNASYNTHALA"/>
</dbReference>
<dbReference type="SMART" id="SM00863">
    <property type="entry name" value="tRNA_SAD"/>
    <property type="match status" value="1"/>
</dbReference>
<dbReference type="SUPFAM" id="SSF55681">
    <property type="entry name" value="Class II aaRS and biotin synthetases"/>
    <property type="match status" value="1"/>
</dbReference>
<dbReference type="SUPFAM" id="SSF101353">
    <property type="entry name" value="Putative anticodon-binding domain of alanyl-tRNA synthetase (AlaRS)"/>
    <property type="match status" value="1"/>
</dbReference>
<dbReference type="SUPFAM" id="SSF55186">
    <property type="entry name" value="ThrRS/AlaRS common domain"/>
    <property type="match status" value="1"/>
</dbReference>
<dbReference type="SUPFAM" id="SSF50447">
    <property type="entry name" value="Translation proteins"/>
    <property type="match status" value="1"/>
</dbReference>
<dbReference type="PROSITE" id="PS50860">
    <property type="entry name" value="AA_TRNA_LIGASE_II_ALA"/>
    <property type="match status" value="1"/>
</dbReference>
<reference key="1">
    <citation type="submission" date="2007-03" db="EMBL/GenBank/DDBJ databases">
        <title>Complete sequence of chromosome of Methanococcus maripaludis C5.</title>
        <authorList>
            <consortium name="US DOE Joint Genome Institute"/>
            <person name="Copeland A."/>
            <person name="Lucas S."/>
            <person name="Lapidus A."/>
            <person name="Barry K."/>
            <person name="Glavina del Rio T."/>
            <person name="Dalin E."/>
            <person name="Tice H."/>
            <person name="Pitluck S."/>
            <person name="Chertkov O."/>
            <person name="Brettin T."/>
            <person name="Bruce D."/>
            <person name="Han C."/>
            <person name="Detter J.C."/>
            <person name="Schmutz J."/>
            <person name="Larimer F."/>
            <person name="Land M."/>
            <person name="Hauser L."/>
            <person name="Kyrpides N."/>
            <person name="Mikhailova N."/>
            <person name="Sieprawska-Lupa M."/>
            <person name="Whitman W.B."/>
            <person name="Richardson P."/>
        </authorList>
    </citation>
    <scope>NUCLEOTIDE SEQUENCE [LARGE SCALE GENOMIC DNA]</scope>
    <source>
        <strain>C5 / ATCC BAA-1333</strain>
    </source>
</reference>
<organism>
    <name type="scientific">Methanococcus maripaludis (strain C5 / ATCC BAA-1333)</name>
    <dbReference type="NCBI Taxonomy" id="402880"/>
    <lineage>
        <taxon>Archaea</taxon>
        <taxon>Methanobacteriati</taxon>
        <taxon>Methanobacteriota</taxon>
        <taxon>Methanomada group</taxon>
        <taxon>Methanococci</taxon>
        <taxon>Methanococcales</taxon>
        <taxon>Methanococcaceae</taxon>
        <taxon>Methanococcus</taxon>
    </lineage>
</organism>
<name>SYA_METM5</name>
<comment type="function">
    <text evidence="1">Catalyzes the attachment of alanine to tRNA(Ala) in a two-step reaction: alanine is first activated by ATP to form Ala-AMP and then transferred to the acceptor end of tRNA(Ala). Also edits incorrectly charged Ser-tRNA(Ala) and Gly-tRNA(Ala) via its editing domain.</text>
</comment>
<comment type="catalytic activity">
    <reaction evidence="1">
        <text>tRNA(Ala) + L-alanine + ATP = L-alanyl-tRNA(Ala) + AMP + diphosphate</text>
        <dbReference type="Rhea" id="RHEA:12540"/>
        <dbReference type="Rhea" id="RHEA-COMP:9657"/>
        <dbReference type="Rhea" id="RHEA-COMP:9923"/>
        <dbReference type="ChEBI" id="CHEBI:30616"/>
        <dbReference type="ChEBI" id="CHEBI:33019"/>
        <dbReference type="ChEBI" id="CHEBI:57972"/>
        <dbReference type="ChEBI" id="CHEBI:78442"/>
        <dbReference type="ChEBI" id="CHEBI:78497"/>
        <dbReference type="ChEBI" id="CHEBI:456215"/>
        <dbReference type="EC" id="6.1.1.7"/>
    </reaction>
</comment>
<comment type="cofactor">
    <cofactor evidence="1">
        <name>Zn(2+)</name>
        <dbReference type="ChEBI" id="CHEBI:29105"/>
    </cofactor>
    <text evidence="1">Binds 1 zinc ion per subunit.</text>
</comment>
<comment type="subcellular location">
    <subcellularLocation>
        <location evidence="1">Cytoplasm</location>
    </subcellularLocation>
</comment>
<comment type="domain">
    <text evidence="1">Consists of three domains; the N-terminal catalytic domain, the editing domain and the C-terminal C-Ala domain. The editing domain removes incorrectly charged amino acids, while the C-Ala domain, along with tRNA(Ala), serves as a bridge to cooperatively bring together the editing and aminoacylation centers thus stimulating deacylation of misacylated tRNAs.</text>
</comment>
<comment type="similarity">
    <text evidence="1">Belongs to the class-II aminoacyl-tRNA synthetase family.</text>
</comment>
<protein>
    <recommendedName>
        <fullName evidence="1">Alanine--tRNA ligase</fullName>
        <ecNumber evidence="1">6.1.1.7</ecNumber>
    </recommendedName>
    <alternativeName>
        <fullName evidence="1">Alanyl-tRNA synthetase</fullName>
        <shortName evidence="1">AlaRS</shortName>
    </alternativeName>
</protein>
<feature type="chain" id="PRO_1000074510" description="Alanine--tRNA ligase">
    <location>
        <begin position="1"/>
        <end position="892"/>
    </location>
</feature>
<feature type="binding site" evidence="1">
    <location>
        <position position="596"/>
    </location>
    <ligand>
        <name>Zn(2+)</name>
        <dbReference type="ChEBI" id="CHEBI:29105"/>
    </ligand>
</feature>
<feature type="binding site" evidence="1">
    <location>
        <position position="600"/>
    </location>
    <ligand>
        <name>Zn(2+)</name>
        <dbReference type="ChEBI" id="CHEBI:29105"/>
    </ligand>
</feature>
<feature type="binding site" evidence="1">
    <location>
        <position position="700"/>
    </location>
    <ligand>
        <name>Zn(2+)</name>
        <dbReference type="ChEBI" id="CHEBI:29105"/>
    </ligand>
</feature>
<feature type="binding site" evidence="1">
    <location>
        <position position="704"/>
    </location>
    <ligand>
        <name>Zn(2+)</name>
        <dbReference type="ChEBI" id="CHEBI:29105"/>
    </ligand>
</feature>
<proteinExistence type="inferred from homology"/>
<sequence length="892" mass="101515">MEINHDYRVKLFDELGFERKQCTECNQWFWTLDKDRTTCGDSPCDEYSFIGSPITSKKYTYNEMVKEFTNFFAEKGHSPVKRSPVVAKRWRDDILLTIASIAVFQPWVTSGLVKPVKNPLVIAQPCIRLNDIDNVGRTGRHLTCFTMGAHHAFNSKDEYKYWTDKTVEYCFELMKRLGIDEKTVTFIESWWEGGGNAGPCYEVITHGVELATLVFMQYKKVGNDYEEIPLKIVDTGYGIERFAWASQGTPTVYESLFSEVIEKLKKDAGIPEVDEKIMAESATLAGLMDIENVGDLRVLRQKVAEKIGMDVDELDKLISPLEYIYAIADHTRCLSFMFGDGIVPSNVKEGYLARLVLRKTLRYMEKIGISMSIKDIIAMQLENMKEIYPELSEMKEYIMDVLDSEEKKYIQTVNRGRGIVERMAVSKSEITLDDLIELYDSNGIPPEIVKDVVDEINKKGKKTIAITVPDNFYTIVAERHEEEKPEEVVSTKKELPELEVSETELLFFKHPTQVEFEAKVLKTVEKYVLLDKTLFYAEGGGQKYDIGQLNGIEVSDVQKKNGIVFHKVSDISKFKEGDTVKGTLNWENRLKLMRNHTATHVINAAATRVLGKHIWQTGSNVDTEKGRLDITHYERISREQVKEIERIANEIVLSKMPVNSTFMDRNDSEQKYGFTIYQGGVVPGDTLRIIEIEGTDVEACGGTHCSNTSEVGYIKVLKTERIQDGVERLEYSTGMGSVSEIAVLEDILIDSAEILGIPNDQLPKTVKRFFEEWKEQKKTIEELQKKVGELVKYELADKFEKHGDYEVLVEQVSGTPNELMSIADNLAIGNKLIVLMNENDYLLCKRGENVELSMKELIRNIGKGGGKDNLAQGKYSETKEQITEKISQILNK</sequence>